<reference key="1">
    <citation type="submission" date="2007-03" db="EMBL/GenBank/DDBJ databases">
        <title>Complete sequence of Shewanella loihica PV-4.</title>
        <authorList>
            <consortium name="US DOE Joint Genome Institute"/>
            <person name="Copeland A."/>
            <person name="Lucas S."/>
            <person name="Lapidus A."/>
            <person name="Barry K."/>
            <person name="Detter J.C."/>
            <person name="Glavina del Rio T."/>
            <person name="Hammon N."/>
            <person name="Israni S."/>
            <person name="Dalin E."/>
            <person name="Tice H."/>
            <person name="Pitluck S."/>
            <person name="Chain P."/>
            <person name="Malfatti S."/>
            <person name="Shin M."/>
            <person name="Vergez L."/>
            <person name="Schmutz J."/>
            <person name="Larimer F."/>
            <person name="Land M."/>
            <person name="Hauser L."/>
            <person name="Kyrpides N."/>
            <person name="Mikhailova N."/>
            <person name="Romine M.F."/>
            <person name="Serres G."/>
            <person name="Fredrickson J."/>
            <person name="Tiedje J."/>
            <person name="Richardson P."/>
        </authorList>
    </citation>
    <scope>NUCLEOTIDE SEQUENCE [LARGE SCALE GENOMIC DNA]</scope>
    <source>
        <strain>ATCC BAA-1088 / PV-4</strain>
    </source>
</reference>
<name>AROA_SHELP</name>
<sequence>MKQLRLNPISKVHGTVNIPGSKSISNRALLLATLAEGKTRLTNLLDSDDIRHMLTALKQLGVNYQLSDNNRVCEVEGLSGVINSDTAQTLFLGNAGTAMRPLCAALTLGSGEFTLTGEPRMEERPIGDLVDALNALGADIRYLKQPGFPPLTINATGLNGGDVEIAGDLSSQFLTALLMVTPLAKAQVNIKIKGELVSKPYIDITIALMAQFGVTVINHDYQRFEIPAGQKYVSPGTVLVEGDASSASYFLAAGAIQGGEVKVTGVGLKSIQGDVKFAEVLEAMGAQIEWGDDFIIARSAPLHGVDLDMNHIPDAAMTIATAALFATGTTTLRNIYNWRIKETDRLAAMATELRKVGAEVEEGHDYIRVTAPAQLNTADIDTYNDHRMAMCFSLMAFADCGITINDPDCTSKTFPDYFAQFAALAQ</sequence>
<accession>A3QEC0</accession>
<gene>
    <name evidence="1" type="primary">aroA</name>
    <name type="ordered locus">Shew_1952</name>
</gene>
<proteinExistence type="inferred from homology"/>
<dbReference type="EC" id="2.5.1.19" evidence="1"/>
<dbReference type="EMBL" id="CP000606">
    <property type="protein sequence ID" value="ABO23818.1"/>
    <property type="molecule type" value="Genomic_DNA"/>
</dbReference>
<dbReference type="RefSeq" id="WP_011865750.1">
    <property type="nucleotide sequence ID" value="NC_009092.1"/>
</dbReference>
<dbReference type="SMR" id="A3QEC0"/>
<dbReference type="STRING" id="323850.Shew_1952"/>
<dbReference type="KEGG" id="slo:Shew_1952"/>
<dbReference type="eggNOG" id="COG0128">
    <property type="taxonomic scope" value="Bacteria"/>
</dbReference>
<dbReference type="HOGENOM" id="CLU_024321_0_0_6"/>
<dbReference type="OrthoDB" id="9809920at2"/>
<dbReference type="UniPathway" id="UPA00053">
    <property type="reaction ID" value="UER00089"/>
</dbReference>
<dbReference type="Proteomes" id="UP000001558">
    <property type="component" value="Chromosome"/>
</dbReference>
<dbReference type="GO" id="GO:0005737">
    <property type="term" value="C:cytoplasm"/>
    <property type="evidence" value="ECO:0007669"/>
    <property type="project" value="UniProtKB-SubCell"/>
</dbReference>
<dbReference type="GO" id="GO:0003866">
    <property type="term" value="F:3-phosphoshikimate 1-carboxyvinyltransferase activity"/>
    <property type="evidence" value="ECO:0007669"/>
    <property type="project" value="UniProtKB-UniRule"/>
</dbReference>
<dbReference type="GO" id="GO:0008652">
    <property type="term" value="P:amino acid biosynthetic process"/>
    <property type="evidence" value="ECO:0007669"/>
    <property type="project" value="UniProtKB-KW"/>
</dbReference>
<dbReference type="GO" id="GO:0009073">
    <property type="term" value="P:aromatic amino acid family biosynthetic process"/>
    <property type="evidence" value="ECO:0007669"/>
    <property type="project" value="UniProtKB-KW"/>
</dbReference>
<dbReference type="GO" id="GO:0009423">
    <property type="term" value="P:chorismate biosynthetic process"/>
    <property type="evidence" value="ECO:0007669"/>
    <property type="project" value="UniProtKB-UniRule"/>
</dbReference>
<dbReference type="CDD" id="cd01556">
    <property type="entry name" value="EPSP_synthase"/>
    <property type="match status" value="1"/>
</dbReference>
<dbReference type="FunFam" id="3.65.10.10:FF:000003">
    <property type="entry name" value="3-phosphoshikimate 1-carboxyvinyltransferase"/>
    <property type="match status" value="1"/>
</dbReference>
<dbReference type="FunFam" id="3.65.10.10:FF:000004">
    <property type="entry name" value="3-phosphoshikimate 1-carboxyvinyltransferase"/>
    <property type="match status" value="1"/>
</dbReference>
<dbReference type="Gene3D" id="3.65.10.10">
    <property type="entry name" value="Enolpyruvate transferase domain"/>
    <property type="match status" value="2"/>
</dbReference>
<dbReference type="HAMAP" id="MF_00210">
    <property type="entry name" value="EPSP_synth"/>
    <property type="match status" value="1"/>
</dbReference>
<dbReference type="InterPro" id="IPR001986">
    <property type="entry name" value="Enolpyruvate_Tfrase_dom"/>
</dbReference>
<dbReference type="InterPro" id="IPR036968">
    <property type="entry name" value="Enolpyruvate_Tfrase_sf"/>
</dbReference>
<dbReference type="InterPro" id="IPR006264">
    <property type="entry name" value="EPSP_synthase"/>
</dbReference>
<dbReference type="InterPro" id="IPR023193">
    <property type="entry name" value="EPSP_synthase_CS"/>
</dbReference>
<dbReference type="InterPro" id="IPR013792">
    <property type="entry name" value="RNA3'P_cycl/enolpyr_Trfase_a/b"/>
</dbReference>
<dbReference type="NCBIfam" id="TIGR01356">
    <property type="entry name" value="aroA"/>
    <property type="match status" value="1"/>
</dbReference>
<dbReference type="PANTHER" id="PTHR21090">
    <property type="entry name" value="AROM/DEHYDROQUINATE SYNTHASE"/>
    <property type="match status" value="1"/>
</dbReference>
<dbReference type="PANTHER" id="PTHR21090:SF5">
    <property type="entry name" value="PENTAFUNCTIONAL AROM POLYPEPTIDE"/>
    <property type="match status" value="1"/>
</dbReference>
<dbReference type="Pfam" id="PF00275">
    <property type="entry name" value="EPSP_synthase"/>
    <property type="match status" value="1"/>
</dbReference>
<dbReference type="PIRSF" id="PIRSF000505">
    <property type="entry name" value="EPSPS"/>
    <property type="match status" value="1"/>
</dbReference>
<dbReference type="SUPFAM" id="SSF55205">
    <property type="entry name" value="EPT/RTPC-like"/>
    <property type="match status" value="1"/>
</dbReference>
<dbReference type="PROSITE" id="PS00104">
    <property type="entry name" value="EPSP_SYNTHASE_1"/>
    <property type="match status" value="1"/>
</dbReference>
<dbReference type="PROSITE" id="PS00885">
    <property type="entry name" value="EPSP_SYNTHASE_2"/>
    <property type="match status" value="1"/>
</dbReference>
<organism>
    <name type="scientific">Shewanella loihica (strain ATCC BAA-1088 / PV-4)</name>
    <dbReference type="NCBI Taxonomy" id="323850"/>
    <lineage>
        <taxon>Bacteria</taxon>
        <taxon>Pseudomonadati</taxon>
        <taxon>Pseudomonadota</taxon>
        <taxon>Gammaproteobacteria</taxon>
        <taxon>Alteromonadales</taxon>
        <taxon>Shewanellaceae</taxon>
        <taxon>Shewanella</taxon>
    </lineage>
</organism>
<evidence type="ECO:0000255" key="1">
    <source>
        <dbReference type="HAMAP-Rule" id="MF_00210"/>
    </source>
</evidence>
<feature type="chain" id="PRO_1000012472" description="3-phosphoshikimate 1-carboxyvinyltransferase">
    <location>
        <begin position="1"/>
        <end position="426"/>
    </location>
</feature>
<feature type="active site" description="Proton acceptor" evidence="1">
    <location>
        <position position="314"/>
    </location>
</feature>
<feature type="binding site" evidence="1">
    <location>
        <position position="22"/>
    </location>
    <ligand>
        <name>3-phosphoshikimate</name>
        <dbReference type="ChEBI" id="CHEBI:145989"/>
    </ligand>
</feature>
<feature type="binding site" evidence="1">
    <location>
        <position position="22"/>
    </location>
    <ligand>
        <name>phosphoenolpyruvate</name>
        <dbReference type="ChEBI" id="CHEBI:58702"/>
    </ligand>
</feature>
<feature type="binding site" evidence="1">
    <location>
        <position position="23"/>
    </location>
    <ligand>
        <name>3-phosphoshikimate</name>
        <dbReference type="ChEBI" id="CHEBI:145989"/>
    </ligand>
</feature>
<feature type="binding site" evidence="1">
    <location>
        <position position="27"/>
    </location>
    <ligand>
        <name>3-phosphoshikimate</name>
        <dbReference type="ChEBI" id="CHEBI:145989"/>
    </ligand>
</feature>
<feature type="binding site" evidence="1">
    <location>
        <position position="96"/>
    </location>
    <ligand>
        <name>phosphoenolpyruvate</name>
        <dbReference type="ChEBI" id="CHEBI:58702"/>
    </ligand>
</feature>
<feature type="binding site" evidence="1">
    <location>
        <position position="124"/>
    </location>
    <ligand>
        <name>phosphoenolpyruvate</name>
        <dbReference type="ChEBI" id="CHEBI:58702"/>
    </ligand>
</feature>
<feature type="binding site" evidence="1">
    <location>
        <position position="170"/>
    </location>
    <ligand>
        <name>3-phosphoshikimate</name>
        <dbReference type="ChEBI" id="CHEBI:145989"/>
    </ligand>
</feature>
<feature type="binding site" evidence="1">
    <location>
        <position position="171"/>
    </location>
    <ligand>
        <name>3-phosphoshikimate</name>
        <dbReference type="ChEBI" id="CHEBI:145989"/>
    </ligand>
</feature>
<feature type="binding site" evidence="1">
    <location>
        <position position="172"/>
    </location>
    <ligand>
        <name>3-phosphoshikimate</name>
        <dbReference type="ChEBI" id="CHEBI:145989"/>
    </ligand>
</feature>
<feature type="binding site" evidence="1">
    <location>
        <position position="172"/>
    </location>
    <ligand>
        <name>phosphoenolpyruvate</name>
        <dbReference type="ChEBI" id="CHEBI:58702"/>
    </ligand>
</feature>
<feature type="binding site" evidence="1">
    <location>
        <position position="198"/>
    </location>
    <ligand>
        <name>3-phosphoshikimate</name>
        <dbReference type="ChEBI" id="CHEBI:145989"/>
    </ligand>
</feature>
<feature type="binding site" evidence="1">
    <location>
        <position position="314"/>
    </location>
    <ligand>
        <name>3-phosphoshikimate</name>
        <dbReference type="ChEBI" id="CHEBI:145989"/>
    </ligand>
</feature>
<feature type="binding site" evidence="1">
    <location>
        <position position="337"/>
    </location>
    <ligand>
        <name>3-phosphoshikimate</name>
        <dbReference type="ChEBI" id="CHEBI:145989"/>
    </ligand>
</feature>
<feature type="binding site" evidence="1">
    <location>
        <position position="341"/>
    </location>
    <ligand>
        <name>3-phosphoshikimate</name>
        <dbReference type="ChEBI" id="CHEBI:145989"/>
    </ligand>
</feature>
<feature type="binding site" evidence="1">
    <location>
        <position position="345"/>
    </location>
    <ligand>
        <name>phosphoenolpyruvate</name>
        <dbReference type="ChEBI" id="CHEBI:58702"/>
    </ligand>
</feature>
<feature type="binding site" evidence="1">
    <location>
        <position position="387"/>
    </location>
    <ligand>
        <name>phosphoenolpyruvate</name>
        <dbReference type="ChEBI" id="CHEBI:58702"/>
    </ligand>
</feature>
<feature type="binding site" evidence="1">
    <location>
        <position position="412"/>
    </location>
    <ligand>
        <name>phosphoenolpyruvate</name>
        <dbReference type="ChEBI" id="CHEBI:58702"/>
    </ligand>
</feature>
<keyword id="KW-0028">Amino-acid biosynthesis</keyword>
<keyword id="KW-0057">Aromatic amino acid biosynthesis</keyword>
<keyword id="KW-0963">Cytoplasm</keyword>
<keyword id="KW-1185">Reference proteome</keyword>
<keyword id="KW-0808">Transferase</keyword>
<protein>
    <recommendedName>
        <fullName evidence="1">3-phosphoshikimate 1-carboxyvinyltransferase</fullName>
        <ecNumber evidence="1">2.5.1.19</ecNumber>
    </recommendedName>
    <alternativeName>
        <fullName evidence="1">5-enolpyruvylshikimate-3-phosphate synthase</fullName>
        <shortName evidence="1">EPSP synthase</shortName>
        <shortName evidence="1">EPSPS</shortName>
    </alternativeName>
</protein>
<comment type="function">
    <text evidence="1">Catalyzes the transfer of the enolpyruvyl moiety of phosphoenolpyruvate (PEP) to the 5-hydroxyl of shikimate-3-phosphate (S3P) to produce enolpyruvyl shikimate-3-phosphate and inorganic phosphate.</text>
</comment>
<comment type="catalytic activity">
    <reaction evidence="1">
        <text>3-phosphoshikimate + phosphoenolpyruvate = 5-O-(1-carboxyvinyl)-3-phosphoshikimate + phosphate</text>
        <dbReference type="Rhea" id="RHEA:21256"/>
        <dbReference type="ChEBI" id="CHEBI:43474"/>
        <dbReference type="ChEBI" id="CHEBI:57701"/>
        <dbReference type="ChEBI" id="CHEBI:58702"/>
        <dbReference type="ChEBI" id="CHEBI:145989"/>
        <dbReference type="EC" id="2.5.1.19"/>
    </reaction>
    <physiologicalReaction direction="left-to-right" evidence="1">
        <dbReference type="Rhea" id="RHEA:21257"/>
    </physiologicalReaction>
</comment>
<comment type="pathway">
    <text evidence="1">Metabolic intermediate biosynthesis; chorismate biosynthesis; chorismate from D-erythrose 4-phosphate and phosphoenolpyruvate: step 6/7.</text>
</comment>
<comment type="subunit">
    <text evidence="1">Monomer.</text>
</comment>
<comment type="subcellular location">
    <subcellularLocation>
        <location evidence="1">Cytoplasm</location>
    </subcellularLocation>
</comment>
<comment type="similarity">
    <text evidence="1">Belongs to the EPSP synthase family.</text>
</comment>